<accession>B3QWF5</accession>
<dbReference type="EC" id="3.1.3.11" evidence="1"/>
<dbReference type="EMBL" id="CP001100">
    <property type="protein sequence ID" value="ACF14715.1"/>
    <property type="molecule type" value="Genomic_DNA"/>
</dbReference>
<dbReference type="RefSeq" id="WP_012500798.1">
    <property type="nucleotide sequence ID" value="NC_011026.1"/>
</dbReference>
<dbReference type="SMR" id="B3QWF5"/>
<dbReference type="STRING" id="517418.Ctha_2264"/>
<dbReference type="KEGG" id="cts:Ctha_2264"/>
<dbReference type="eggNOG" id="COG0158">
    <property type="taxonomic scope" value="Bacteria"/>
</dbReference>
<dbReference type="HOGENOM" id="CLU_039977_2_2_10"/>
<dbReference type="OrthoDB" id="9806756at2"/>
<dbReference type="UniPathway" id="UPA00116"/>
<dbReference type="Proteomes" id="UP000001208">
    <property type="component" value="Chromosome"/>
</dbReference>
<dbReference type="GO" id="GO:0005829">
    <property type="term" value="C:cytosol"/>
    <property type="evidence" value="ECO:0007669"/>
    <property type="project" value="TreeGrafter"/>
</dbReference>
<dbReference type="GO" id="GO:0042132">
    <property type="term" value="F:fructose 1,6-bisphosphate 1-phosphatase activity"/>
    <property type="evidence" value="ECO:0007669"/>
    <property type="project" value="UniProtKB-UniRule"/>
</dbReference>
<dbReference type="GO" id="GO:0000287">
    <property type="term" value="F:magnesium ion binding"/>
    <property type="evidence" value="ECO:0007669"/>
    <property type="project" value="UniProtKB-UniRule"/>
</dbReference>
<dbReference type="GO" id="GO:0030388">
    <property type="term" value="P:fructose 1,6-bisphosphate metabolic process"/>
    <property type="evidence" value="ECO:0007669"/>
    <property type="project" value="TreeGrafter"/>
</dbReference>
<dbReference type="GO" id="GO:0006002">
    <property type="term" value="P:fructose 6-phosphate metabolic process"/>
    <property type="evidence" value="ECO:0007669"/>
    <property type="project" value="TreeGrafter"/>
</dbReference>
<dbReference type="GO" id="GO:0006000">
    <property type="term" value="P:fructose metabolic process"/>
    <property type="evidence" value="ECO:0007669"/>
    <property type="project" value="TreeGrafter"/>
</dbReference>
<dbReference type="GO" id="GO:0006094">
    <property type="term" value="P:gluconeogenesis"/>
    <property type="evidence" value="ECO:0007669"/>
    <property type="project" value="UniProtKB-UniRule"/>
</dbReference>
<dbReference type="GO" id="GO:0019253">
    <property type="term" value="P:reductive pentose-phosphate cycle"/>
    <property type="evidence" value="ECO:0007669"/>
    <property type="project" value="UniProtKB-UniRule"/>
</dbReference>
<dbReference type="GO" id="GO:0005986">
    <property type="term" value="P:sucrose biosynthetic process"/>
    <property type="evidence" value="ECO:0007669"/>
    <property type="project" value="TreeGrafter"/>
</dbReference>
<dbReference type="CDD" id="cd00354">
    <property type="entry name" value="FBPase"/>
    <property type="match status" value="1"/>
</dbReference>
<dbReference type="FunFam" id="3.30.540.10:FF:000002">
    <property type="entry name" value="Fructose-1,6-bisphosphatase class 1"/>
    <property type="match status" value="1"/>
</dbReference>
<dbReference type="FunFam" id="3.40.190.80:FF:000001">
    <property type="entry name" value="Fructose-1,6-bisphosphatase class 1"/>
    <property type="match status" value="1"/>
</dbReference>
<dbReference type="Gene3D" id="3.40.190.80">
    <property type="match status" value="1"/>
</dbReference>
<dbReference type="Gene3D" id="3.30.540.10">
    <property type="entry name" value="Fructose-1,6-Bisphosphatase, subunit A, domain 1"/>
    <property type="match status" value="1"/>
</dbReference>
<dbReference type="HAMAP" id="MF_01855">
    <property type="entry name" value="FBPase_class1"/>
    <property type="match status" value="1"/>
</dbReference>
<dbReference type="InterPro" id="IPR044015">
    <property type="entry name" value="FBPase_C_dom"/>
</dbReference>
<dbReference type="InterPro" id="IPR000146">
    <property type="entry name" value="FBPase_class-1"/>
</dbReference>
<dbReference type="InterPro" id="IPR033391">
    <property type="entry name" value="FBPase_N"/>
</dbReference>
<dbReference type="InterPro" id="IPR028343">
    <property type="entry name" value="FBPtase"/>
</dbReference>
<dbReference type="NCBIfam" id="NF006778">
    <property type="entry name" value="PRK09293.1-1"/>
    <property type="match status" value="1"/>
</dbReference>
<dbReference type="PANTHER" id="PTHR11556">
    <property type="entry name" value="FRUCTOSE-1,6-BISPHOSPHATASE-RELATED"/>
    <property type="match status" value="1"/>
</dbReference>
<dbReference type="PANTHER" id="PTHR11556:SF35">
    <property type="entry name" value="SEDOHEPTULOSE-1,7-BISPHOSPHATASE, CHLOROPLASTIC"/>
    <property type="match status" value="1"/>
</dbReference>
<dbReference type="Pfam" id="PF00316">
    <property type="entry name" value="FBPase"/>
    <property type="match status" value="1"/>
</dbReference>
<dbReference type="Pfam" id="PF18913">
    <property type="entry name" value="FBPase_C"/>
    <property type="match status" value="1"/>
</dbReference>
<dbReference type="PIRSF" id="PIRSF500210">
    <property type="entry name" value="FBPtase"/>
    <property type="match status" value="1"/>
</dbReference>
<dbReference type="PIRSF" id="PIRSF000904">
    <property type="entry name" value="FBPtase_SBPase"/>
    <property type="match status" value="1"/>
</dbReference>
<dbReference type="PRINTS" id="PR00115">
    <property type="entry name" value="F16BPHPHTASE"/>
</dbReference>
<dbReference type="SUPFAM" id="SSF56655">
    <property type="entry name" value="Carbohydrate phosphatase"/>
    <property type="match status" value="1"/>
</dbReference>
<keyword id="KW-0113">Calvin cycle</keyword>
<keyword id="KW-0119">Carbohydrate metabolism</keyword>
<keyword id="KW-0963">Cytoplasm</keyword>
<keyword id="KW-0378">Hydrolase</keyword>
<keyword id="KW-0460">Magnesium</keyword>
<keyword id="KW-0479">Metal-binding</keyword>
<keyword id="KW-1185">Reference proteome</keyword>
<organism>
    <name type="scientific">Chloroherpeton thalassium (strain ATCC 35110 / GB-78)</name>
    <dbReference type="NCBI Taxonomy" id="517418"/>
    <lineage>
        <taxon>Bacteria</taxon>
        <taxon>Pseudomonadati</taxon>
        <taxon>Chlorobiota</taxon>
        <taxon>Chlorobiia</taxon>
        <taxon>Chlorobiales</taxon>
        <taxon>Chloroherpetonaceae</taxon>
        <taxon>Chloroherpeton</taxon>
    </lineage>
</organism>
<gene>
    <name evidence="1" type="primary">fbp</name>
    <name type="ordered locus">Ctha_2264</name>
</gene>
<sequence length="349" mass="38808">MGDLITIERHVLESQKDHPGATGEFTKLLYDVAFAAKLVYRHVVRAGLVDILGSAGSTNVQGEEVKKLDLFANEQFTKAIGHHGRFAVMASEENEDIILPPLDKYGKYVLLFDPLDGSSNIDANVSVGTIFSIFKRKSDAGGPGTLEDCLQKGAEQVASGYVIYGSSVMLVYTTGQGVHGFTLDPSIGEFLLSHENIKTPKRGKIYSMNEGYYRYFDDGIKKYIKYLQQEDKASKRPYSARYIGSCVADFHRNLLYGGIFIYPRTAKSPKGKLRLMYEANPLAFICEQAGGRASNGRERILDIKPTELHQRTPLFIGSEEDVKIAEEFEQGLRDIEHDEALCPKSLTSE</sequence>
<feature type="chain" id="PRO_0000364526" description="Fructose-1,6-bisphosphatase class 1">
    <location>
        <begin position="1"/>
        <end position="349"/>
    </location>
</feature>
<feature type="binding site" evidence="1">
    <location>
        <position position="92"/>
    </location>
    <ligand>
        <name>Mg(2+)</name>
        <dbReference type="ChEBI" id="CHEBI:18420"/>
        <label>1</label>
    </ligand>
</feature>
<feature type="binding site" evidence="1">
    <location>
        <position position="113"/>
    </location>
    <ligand>
        <name>Mg(2+)</name>
        <dbReference type="ChEBI" id="CHEBI:18420"/>
        <label>1</label>
    </ligand>
</feature>
<feature type="binding site" evidence="1">
    <location>
        <position position="113"/>
    </location>
    <ligand>
        <name>Mg(2+)</name>
        <dbReference type="ChEBI" id="CHEBI:18420"/>
        <label>2</label>
    </ligand>
</feature>
<feature type="binding site" evidence="1">
    <location>
        <position position="115"/>
    </location>
    <ligand>
        <name>Mg(2+)</name>
        <dbReference type="ChEBI" id="CHEBI:18420"/>
        <label>1</label>
    </ligand>
</feature>
<feature type="binding site" evidence="1">
    <location>
        <begin position="116"/>
        <end position="119"/>
    </location>
    <ligand>
        <name>substrate</name>
    </ligand>
</feature>
<feature type="binding site" evidence="1">
    <location>
        <position position="116"/>
    </location>
    <ligand>
        <name>Mg(2+)</name>
        <dbReference type="ChEBI" id="CHEBI:18420"/>
        <label>2</label>
    </ligand>
</feature>
<feature type="binding site" evidence="1">
    <location>
        <position position="209"/>
    </location>
    <ligand>
        <name>substrate</name>
    </ligand>
</feature>
<feature type="binding site" evidence="1">
    <location>
        <position position="242"/>
    </location>
    <ligand>
        <name>substrate</name>
    </ligand>
</feature>
<feature type="binding site" evidence="1">
    <location>
        <position position="272"/>
    </location>
    <ligand>
        <name>substrate</name>
    </ligand>
</feature>
<feature type="binding site" evidence="1">
    <location>
        <position position="278"/>
    </location>
    <ligand>
        <name>Mg(2+)</name>
        <dbReference type="ChEBI" id="CHEBI:18420"/>
        <label>2</label>
    </ligand>
</feature>
<comment type="catalytic activity">
    <reaction evidence="1">
        <text>beta-D-fructose 1,6-bisphosphate + H2O = beta-D-fructose 6-phosphate + phosphate</text>
        <dbReference type="Rhea" id="RHEA:11064"/>
        <dbReference type="ChEBI" id="CHEBI:15377"/>
        <dbReference type="ChEBI" id="CHEBI:32966"/>
        <dbReference type="ChEBI" id="CHEBI:43474"/>
        <dbReference type="ChEBI" id="CHEBI:57634"/>
        <dbReference type="EC" id="3.1.3.11"/>
    </reaction>
</comment>
<comment type="cofactor">
    <cofactor evidence="1">
        <name>Mg(2+)</name>
        <dbReference type="ChEBI" id="CHEBI:18420"/>
    </cofactor>
    <text evidence="1">Binds 2 magnesium ions per subunit.</text>
</comment>
<comment type="pathway">
    <text evidence="1">Carbohydrate biosynthesis; Calvin cycle.</text>
</comment>
<comment type="subunit">
    <text evidence="1">Homotetramer.</text>
</comment>
<comment type="subcellular location">
    <subcellularLocation>
        <location evidence="1">Cytoplasm</location>
    </subcellularLocation>
</comment>
<comment type="similarity">
    <text evidence="1">Belongs to the FBPase class 1 family.</text>
</comment>
<proteinExistence type="inferred from homology"/>
<name>F16PA_CHLT3</name>
<evidence type="ECO:0000255" key="1">
    <source>
        <dbReference type="HAMAP-Rule" id="MF_01855"/>
    </source>
</evidence>
<reference key="1">
    <citation type="submission" date="2008-06" db="EMBL/GenBank/DDBJ databases">
        <title>Complete sequence of Chloroherpeton thalassium ATCC 35110.</title>
        <authorList>
            <consortium name="US DOE Joint Genome Institute"/>
            <person name="Lucas S."/>
            <person name="Copeland A."/>
            <person name="Lapidus A."/>
            <person name="Glavina del Rio T."/>
            <person name="Dalin E."/>
            <person name="Tice H."/>
            <person name="Bruce D."/>
            <person name="Goodwin L."/>
            <person name="Pitluck S."/>
            <person name="Schmutz J."/>
            <person name="Larimer F."/>
            <person name="Land M."/>
            <person name="Hauser L."/>
            <person name="Kyrpides N."/>
            <person name="Mikhailova N."/>
            <person name="Liu Z."/>
            <person name="Li T."/>
            <person name="Zhao F."/>
            <person name="Overmann J."/>
            <person name="Bryant D.A."/>
            <person name="Richardson P."/>
        </authorList>
    </citation>
    <scope>NUCLEOTIDE SEQUENCE [LARGE SCALE GENOMIC DNA]</scope>
    <source>
        <strain>ATCC 35110 / GB-78</strain>
    </source>
</reference>
<protein>
    <recommendedName>
        <fullName evidence="1">Fructose-1,6-bisphosphatase class 1</fullName>
        <shortName evidence="1">FBPase class 1</shortName>
        <ecNumber evidence="1">3.1.3.11</ecNumber>
    </recommendedName>
    <alternativeName>
        <fullName evidence="1">D-fructose-1,6-bisphosphate 1-phosphohydrolase class 1</fullName>
    </alternativeName>
</protein>